<keyword id="KW-0150">Chloroplast</keyword>
<keyword id="KW-0934">Plastid</keyword>
<keyword id="KW-0687">Ribonucleoprotein</keyword>
<keyword id="KW-0689">Ribosomal protein</keyword>
<keyword id="KW-0694">RNA-binding</keyword>
<keyword id="KW-0699">rRNA-binding</keyword>
<feature type="chain" id="PRO_0000272924" description="Large ribosomal subunit protein uL23cz/uL23cy">
    <location>
        <begin position="1"/>
        <end position="93"/>
    </location>
</feature>
<reference key="1">
    <citation type="journal article" date="2006" name="Transgenic Res.">
        <title>Transformation of poplar (Populus alba) plastids and expression of foreign proteins in tree chloroplasts.</title>
        <authorList>
            <person name="Okumura S."/>
            <person name="Sawada M."/>
            <person name="Park Y.W."/>
            <person name="Hayashi T."/>
            <person name="Shimamura M."/>
            <person name="Takase H."/>
            <person name="Tomizawa K."/>
        </authorList>
    </citation>
    <scope>NUCLEOTIDE SEQUENCE [LARGE SCALE GENOMIC DNA]</scope>
</reference>
<gene>
    <name type="primary">rpl23-A</name>
</gene>
<gene>
    <name type="primary">rpl23-B</name>
</gene>
<protein>
    <recommendedName>
        <fullName evidence="2">Large ribosomal subunit protein uL23cz/uL23cy</fullName>
    </recommendedName>
    <alternativeName>
        <fullName>50S ribosomal protein L23, chloroplastic</fullName>
    </alternativeName>
</protein>
<organism>
    <name type="scientific">Populus alba</name>
    <name type="common">White poplar</name>
    <dbReference type="NCBI Taxonomy" id="43335"/>
    <lineage>
        <taxon>Eukaryota</taxon>
        <taxon>Viridiplantae</taxon>
        <taxon>Streptophyta</taxon>
        <taxon>Embryophyta</taxon>
        <taxon>Tracheophyta</taxon>
        <taxon>Spermatophyta</taxon>
        <taxon>Magnoliopsida</taxon>
        <taxon>eudicotyledons</taxon>
        <taxon>Gunneridae</taxon>
        <taxon>Pentapetalae</taxon>
        <taxon>rosids</taxon>
        <taxon>fabids</taxon>
        <taxon>Malpighiales</taxon>
        <taxon>Salicaceae</taxon>
        <taxon>Saliceae</taxon>
        <taxon>Populus</taxon>
    </lineage>
</organism>
<dbReference type="EMBL" id="AP008956">
    <property type="protein sequence ID" value="BAE97247.1"/>
    <property type="molecule type" value="Genomic_DNA"/>
</dbReference>
<dbReference type="EMBL" id="AP008956">
    <property type="protein sequence ID" value="BAE97266.1"/>
    <property type="molecule type" value="Genomic_DNA"/>
</dbReference>
<dbReference type="SMR" id="Q14F96"/>
<dbReference type="KEGG" id="palz:4178249"/>
<dbReference type="KEGG" id="palz:4178250"/>
<dbReference type="OrthoDB" id="1034at3646"/>
<dbReference type="GO" id="GO:0009507">
    <property type="term" value="C:chloroplast"/>
    <property type="evidence" value="ECO:0007669"/>
    <property type="project" value="UniProtKB-SubCell"/>
</dbReference>
<dbReference type="GO" id="GO:1990904">
    <property type="term" value="C:ribonucleoprotein complex"/>
    <property type="evidence" value="ECO:0007669"/>
    <property type="project" value="UniProtKB-KW"/>
</dbReference>
<dbReference type="GO" id="GO:0005840">
    <property type="term" value="C:ribosome"/>
    <property type="evidence" value="ECO:0007669"/>
    <property type="project" value="UniProtKB-KW"/>
</dbReference>
<dbReference type="GO" id="GO:0003729">
    <property type="term" value="F:mRNA binding"/>
    <property type="evidence" value="ECO:0007669"/>
    <property type="project" value="UniProtKB-ARBA"/>
</dbReference>
<dbReference type="GO" id="GO:0019843">
    <property type="term" value="F:rRNA binding"/>
    <property type="evidence" value="ECO:0007669"/>
    <property type="project" value="UniProtKB-UniRule"/>
</dbReference>
<dbReference type="GO" id="GO:0003735">
    <property type="term" value="F:structural constituent of ribosome"/>
    <property type="evidence" value="ECO:0007669"/>
    <property type="project" value="InterPro"/>
</dbReference>
<dbReference type="GO" id="GO:0006412">
    <property type="term" value="P:translation"/>
    <property type="evidence" value="ECO:0007669"/>
    <property type="project" value="UniProtKB-UniRule"/>
</dbReference>
<dbReference type="FunFam" id="3.30.70.330:FF:000002">
    <property type="entry name" value="50S ribosomal protein L23, chloroplastic"/>
    <property type="match status" value="1"/>
</dbReference>
<dbReference type="Gene3D" id="3.30.70.330">
    <property type="match status" value="1"/>
</dbReference>
<dbReference type="HAMAP" id="MF_01369_B">
    <property type="entry name" value="Ribosomal_uL23_B"/>
    <property type="match status" value="1"/>
</dbReference>
<dbReference type="InterPro" id="IPR012677">
    <property type="entry name" value="Nucleotide-bd_a/b_plait_sf"/>
</dbReference>
<dbReference type="InterPro" id="IPR013025">
    <property type="entry name" value="Ribosomal_uL23-like"/>
</dbReference>
<dbReference type="InterPro" id="IPR012678">
    <property type="entry name" value="Ribosomal_uL23/eL15/eS24_sf"/>
</dbReference>
<dbReference type="InterPro" id="IPR001014">
    <property type="entry name" value="Ribosomal_uL23_CS"/>
</dbReference>
<dbReference type="PANTHER" id="PTHR11620">
    <property type="entry name" value="60S RIBOSOMAL PROTEIN L23A"/>
    <property type="match status" value="1"/>
</dbReference>
<dbReference type="Pfam" id="PF00276">
    <property type="entry name" value="Ribosomal_L23"/>
    <property type="match status" value="1"/>
</dbReference>
<dbReference type="SUPFAM" id="SSF54189">
    <property type="entry name" value="Ribosomal proteins S24e, L23 and L15e"/>
    <property type="match status" value="1"/>
</dbReference>
<dbReference type="PROSITE" id="PS00050">
    <property type="entry name" value="RIBOSOMAL_L23"/>
    <property type="match status" value="1"/>
</dbReference>
<name>RK23_POPAL</name>
<accession>Q14F96</accession>
<evidence type="ECO:0000250" key="1"/>
<evidence type="ECO:0000305" key="2"/>
<comment type="function">
    <text evidence="1">Binds to 23S rRNA.</text>
</comment>
<comment type="subunit">
    <text evidence="1">Part of the 50S ribosomal subunit.</text>
</comment>
<comment type="subcellular location">
    <subcellularLocation>
        <location>Plastid</location>
        <location>Chloroplast</location>
    </subcellularLocation>
</comment>
<comment type="similarity">
    <text evidence="2">Belongs to the universal ribosomal protein uL23 family.</text>
</comment>
<geneLocation type="chloroplast"/>
<sequence>MDGIKYAVVTDKSIRLLLKNQYTSNVESGSTRTEIKHWVELFFGVKVIAMNSHRLPGKGRRMRPIMGHTMHYRRMIITLQPGYSIPPLRKKRT</sequence>
<proteinExistence type="inferred from homology"/>